<organism>
    <name type="scientific">Bacillus subtilis (strain 168)</name>
    <dbReference type="NCBI Taxonomy" id="224308"/>
    <lineage>
        <taxon>Bacteria</taxon>
        <taxon>Bacillati</taxon>
        <taxon>Bacillota</taxon>
        <taxon>Bacilli</taxon>
        <taxon>Bacillales</taxon>
        <taxon>Bacillaceae</taxon>
        <taxon>Bacillus</taxon>
    </lineage>
</organism>
<accession>O34637</accession>
<accession>Q796D4</accession>
<sequence>MGFSHITHLDLKRFAGLSQRTSNALEMTEERRIPALWDQLWKQDMSALLSQAEKDKSIIALYSNYEQETNGFYTFSVGTFQEYDDILPGPYENIDLPASAYAVFTSRIGPIEEIVLETWKEIWTWDKRHLRTFTGDFEMYDQNAAVPQRAQVNIYVAIKK</sequence>
<dbReference type="EMBL" id="AF027868">
    <property type="protein sequence ID" value="AAB84471.1"/>
    <property type="molecule type" value="Genomic_DNA"/>
</dbReference>
<dbReference type="EMBL" id="AL009126">
    <property type="protein sequence ID" value="CAB13801.1"/>
    <property type="molecule type" value="Genomic_DNA"/>
</dbReference>
<dbReference type="PIR" id="C69900">
    <property type="entry name" value="C69900"/>
</dbReference>
<dbReference type="RefSeq" id="NP_389790.1">
    <property type="nucleotide sequence ID" value="NC_000964.3"/>
</dbReference>
<dbReference type="RefSeq" id="WP_003231292.1">
    <property type="nucleotide sequence ID" value="NZ_OZ025638.1"/>
</dbReference>
<dbReference type="SMR" id="O34637"/>
<dbReference type="FunCoup" id="O34637">
    <property type="interactions" value="9"/>
</dbReference>
<dbReference type="STRING" id="224308.BSU19090"/>
<dbReference type="PaxDb" id="224308-BSU19090"/>
<dbReference type="EnsemblBacteria" id="CAB13801">
    <property type="protein sequence ID" value="CAB13801"/>
    <property type="gene ID" value="BSU_19090"/>
</dbReference>
<dbReference type="GeneID" id="939647"/>
<dbReference type="KEGG" id="bsu:BSU19090"/>
<dbReference type="PATRIC" id="fig|224308.179.peg.2087"/>
<dbReference type="eggNOG" id="COG3708">
    <property type="taxonomic scope" value="Bacteria"/>
</dbReference>
<dbReference type="InParanoid" id="O34637"/>
<dbReference type="OrthoDB" id="9801008at2"/>
<dbReference type="BioCyc" id="BSUB:BSU19090-MONOMER"/>
<dbReference type="Proteomes" id="UP000001570">
    <property type="component" value="Chromosome"/>
</dbReference>
<dbReference type="Gene3D" id="3.20.80.10">
    <property type="entry name" value="Regulatory factor, effector binding domain"/>
    <property type="match status" value="1"/>
</dbReference>
<dbReference type="InterPro" id="IPR010499">
    <property type="entry name" value="AraC_E-bd"/>
</dbReference>
<dbReference type="InterPro" id="IPR029442">
    <property type="entry name" value="GyrI-like"/>
</dbReference>
<dbReference type="InterPro" id="IPR011256">
    <property type="entry name" value="Reg_factor_effector_dom_sf"/>
</dbReference>
<dbReference type="InterPro" id="IPR053182">
    <property type="entry name" value="YobU-like_regulator"/>
</dbReference>
<dbReference type="PANTHER" id="PTHR36444">
    <property type="entry name" value="TRANSCRIPTIONAL REGULATOR PROTEIN YOBU-RELATED"/>
    <property type="match status" value="1"/>
</dbReference>
<dbReference type="PANTHER" id="PTHR36444:SF2">
    <property type="entry name" value="TRANSCRIPTIONAL REGULATOR PROTEIN YOBU-RELATED"/>
    <property type="match status" value="1"/>
</dbReference>
<dbReference type="Pfam" id="PF06445">
    <property type="entry name" value="GyrI-like"/>
    <property type="match status" value="1"/>
</dbReference>
<dbReference type="SMART" id="SM00871">
    <property type="entry name" value="AraC_E_bind"/>
    <property type="match status" value="1"/>
</dbReference>
<dbReference type="SUPFAM" id="SSF55136">
    <property type="entry name" value="Probable bacterial effector-binding domain"/>
    <property type="match status" value="1"/>
</dbReference>
<reference key="1">
    <citation type="submission" date="1997-10" db="EMBL/GenBank/DDBJ databases">
        <title>Sequence analysis of the Bacillus subtilis chromosome region between the terC and odhAB loci cloned in a yeast artificial chromosome.</title>
        <authorList>
            <person name="Lapidus A."/>
            <person name="Galleron N."/>
            <person name="Sorokin A."/>
            <person name="Ehrlich D."/>
        </authorList>
    </citation>
    <scope>NUCLEOTIDE SEQUENCE [GENOMIC DNA]</scope>
</reference>
<reference key="2">
    <citation type="journal article" date="1997" name="Nature">
        <title>The complete genome sequence of the Gram-positive bacterium Bacillus subtilis.</title>
        <authorList>
            <person name="Kunst F."/>
            <person name="Ogasawara N."/>
            <person name="Moszer I."/>
            <person name="Albertini A.M."/>
            <person name="Alloni G."/>
            <person name="Azevedo V."/>
            <person name="Bertero M.G."/>
            <person name="Bessieres P."/>
            <person name="Bolotin A."/>
            <person name="Borchert S."/>
            <person name="Borriss R."/>
            <person name="Boursier L."/>
            <person name="Brans A."/>
            <person name="Braun M."/>
            <person name="Brignell S.C."/>
            <person name="Bron S."/>
            <person name="Brouillet S."/>
            <person name="Bruschi C.V."/>
            <person name="Caldwell B."/>
            <person name="Capuano V."/>
            <person name="Carter N.M."/>
            <person name="Choi S.-K."/>
            <person name="Codani J.-J."/>
            <person name="Connerton I.F."/>
            <person name="Cummings N.J."/>
            <person name="Daniel R.A."/>
            <person name="Denizot F."/>
            <person name="Devine K.M."/>
            <person name="Duesterhoeft A."/>
            <person name="Ehrlich S.D."/>
            <person name="Emmerson P.T."/>
            <person name="Entian K.-D."/>
            <person name="Errington J."/>
            <person name="Fabret C."/>
            <person name="Ferrari E."/>
            <person name="Foulger D."/>
            <person name="Fritz C."/>
            <person name="Fujita M."/>
            <person name="Fujita Y."/>
            <person name="Fuma S."/>
            <person name="Galizzi A."/>
            <person name="Galleron N."/>
            <person name="Ghim S.-Y."/>
            <person name="Glaser P."/>
            <person name="Goffeau A."/>
            <person name="Golightly E.J."/>
            <person name="Grandi G."/>
            <person name="Guiseppi G."/>
            <person name="Guy B.J."/>
            <person name="Haga K."/>
            <person name="Haiech J."/>
            <person name="Harwood C.R."/>
            <person name="Henaut A."/>
            <person name="Hilbert H."/>
            <person name="Holsappel S."/>
            <person name="Hosono S."/>
            <person name="Hullo M.-F."/>
            <person name="Itaya M."/>
            <person name="Jones L.-M."/>
            <person name="Joris B."/>
            <person name="Karamata D."/>
            <person name="Kasahara Y."/>
            <person name="Klaerr-Blanchard M."/>
            <person name="Klein C."/>
            <person name="Kobayashi Y."/>
            <person name="Koetter P."/>
            <person name="Koningstein G."/>
            <person name="Krogh S."/>
            <person name="Kumano M."/>
            <person name="Kurita K."/>
            <person name="Lapidus A."/>
            <person name="Lardinois S."/>
            <person name="Lauber J."/>
            <person name="Lazarevic V."/>
            <person name="Lee S.-M."/>
            <person name="Levine A."/>
            <person name="Liu H."/>
            <person name="Masuda S."/>
            <person name="Mauel C."/>
            <person name="Medigue C."/>
            <person name="Medina N."/>
            <person name="Mellado R.P."/>
            <person name="Mizuno M."/>
            <person name="Moestl D."/>
            <person name="Nakai S."/>
            <person name="Noback M."/>
            <person name="Noone D."/>
            <person name="O'Reilly M."/>
            <person name="Ogawa K."/>
            <person name="Ogiwara A."/>
            <person name="Oudega B."/>
            <person name="Park S.-H."/>
            <person name="Parro V."/>
            <person name="Pohl T.M."/>
            <person name="Portetelle D."/>
            <person name="Porwollik S."/>
            <person name="Prescott A.M."/>
            <person name="Presecan E."/>
            <person name="Pujic P."/>
            <person name="Purnelle B."/>
            <person name="Rapoport G."/>
            <person name="Rey M."/>
            <person name="Reynolds S."/>
            <person name="Rieger M."/>
            <person name="Rivolta C."/>
            <person name="Rocha E."/>
            <person name="Roche B."/>
            <person name="Rose M."/>
            <person name="Sadaie Y."/>
            <person name="Sato T."/>
            <person name="Scanlan E."/>
            <person name="Schleich S."/>
            <person name="Schroeter R."/>
            <person name="Scoffone F."/>
            <person name="Sekiguchi J."/>
            <person name="Sekowska A."/>
            <person name="Seror S.J."/>
            <person name="Serror P."/>
            <person name="Shin B.-S."/>
            <person name="Soldo B."/>
            <person name="Sorokin A."/>
            <person name="Tacconi E."/>
            <person name="Takagi T."/>
            <person name="Takahashi H."/>
            <person name="Takemaru K."/>
            <person name="Takeuchi M."/>
            <person name="Tamakoshi A."/>
            <person name="Tanaka T."/>
            <person name="Terpstra P."/>
            <person name="Tognoni A."/>
            <person name="Tosato V."/>
            <person name="Uchiyama S."/>
            <person name="Vandenbol M."/>
            <person name="Vannier F."/>
            <person name="Vassarotti A."/>
            <person name="Viari A."/>
            <person name="Wambutt R."/>
            <person name="Wedler E."/>
            <person name="Wedler H."/>
            <person name="Weitzenegger T."/>
            <person name="Winters P."/>
            <person name="Wipat A."/>
            <person name="Yamamoto H."/>
            <person name="Yamane K."/>
            <person name="Yasumoto K."/>
            <person name="Yata K."/>
            <person name="Yoshida K."/>
            <person name="Yoshikawa H.-F."/>
            <person name="Zumstein E."/>
            <person name="Yoshikawa H."/>
            <person name="Danchin A."/>
        </authorList>
    </citation>
    <scope>NUCLEOTIDE SEQUENCE [LARGE SCALE GENOMIC DNA]</scope>
    <source>
        <strain>168</strain>
    </source>
</reference>
<name>YOBU_BACSU</name>
<proteinExistence type="predicted"/>
<protein>
    <recommendedName>
        <fullName>Putative transcriptional regulator protein YobU</fullName>
    </recommendedName>
</protein>
<feature type="chain" id="PRO_0000388357" description="Putative transcriptional regulator protein YobU">
    <location>
        <begin position="1"/>
        <end position="160"/>
    </location>
</feature>
<keyword id="KW-1185">Reference proteome</keyword>
<gene>
    <name type="primary">yobU</name>
    <name type="ordered locus">BSU19090</name>
</gene>